<protein>
    <recommendedName>
        <fullName>Negative regulator of sporulation PMD1</fullName>
    </recommendedName>
</protein>
<organism>
    <name type="scientific">Saccharomyces cerevisiae (strain ATCC 204508 / S288c)</name>
    <name type="common">Baker's yeast</name>
    <dbReference type="NCBI Taxonomy" id="559292"/>
    <lineage>
        <taxon>Eukaryota</taxon>
        <taxon>Fungi</taxon>
        <taxon>Dikarya</taxon>
        <taxon>Ascomycota</taxon>
        <taxon>Saccharomycotina</taxon>
        <taxon>Saccharomycetes</taxon>
        <taxon>Saccharomycetales</taxon>
        <taxon>Saccharomycetaceae</taxon>
        <taxon>Saccharomyces</taxon>
    </lineage>
</organism>
<keyword id="KW-0963">Cytoplasm</keyword>
<keyword id="KW-0880">Kelch repeat</keyword>
<keyword id="KW-0469">Meiosis</keyword>
<keyword id="KW-0597">Phosphoprotein</keyword>
<keyword id="KW-1185">Reference proteome</keyword>
<keyword id="KW-0677">Repeat</keyword>
<keyword id="KW-0749">Sporulation</keyword>
<dbReference type="EMBL" id="U18916">
    <property type="protein sequence ID" value="AAC03230.1"/>
    <property type="molecule type" value="Genomic_DNA"/>
</dbReference>
<dbReference type="EMBL" id="BK006939">
    <property type="protein sequence ID" value="DAA07792.1"/>
    <property type="molecule type" value="Genomic_DNA"/>
</dbReference>
<dbReference type="PIR" id="S30855">
    <property type="entry name" value="S30855"/>
</dbReference>
<dbReference type="RefSeq" id="NP_011058.3">
    <property type="nucleotide sequence ID" value="NM_001179022.3"/>
</dbReference>
<dbReference type="BioGRID" id="36876">
    <property type="interactions" value="82"/>
</dbReference>
<dbReference type="DIP" id="DIP-2381N"/>
<dbReference type="FunCoup" id="P32634">
    <property type="interactions" value="224"/>
</dbReference>
<dbReference type="IntAct" id="P32634">
    <property type="interactions" value="19"/>
</dbReference>
<dbReference type="MINT" id="P32634"/>
<dbReference type="STRING" id="4932.YER132C"/>
<dbReference type="GlyGen" id="P32634">
    <property type="glycosylation" value="4 sites, 1 O-linked glycan (4 sites)"/>
</dbReference>
<dbReference type="iPTMnet" id="P32634"/>
<dbReference type="PaxDb" id="4932-YER132C"/>
<dbReference type="PeptideAtlas" id="P32634"/>
<dbReference type="EnsemblFungi" id="YER132C_mRNA">
    <property type="protein sequence ID" value="YER132C"/>
    <property type="gene ID" value="YER132C"/>
</dbReference>
<dbReference type="GeneID" id="856869"/>
<dbReference type="KEGG" id="sce:YER132C"/>
<dbReference type="AGR" id="SGD:S000000934"/>
<dbReference type="SGD" id="S000000934">
    <property type="gene designation" value="PMD1"/>
</dbReference>
<dbReference type="VEuPathDB" id="FungiDB:YER132C"/>
<dbReference type="eggNOG" id="KOG0379">
    <property type="taxonomic scope" value="Eukaryota"/>
</dbReference>
<dbReference type="GeneTree" id="ENSGT00940000176594"/>
<dbReference type="HOGENOM" id="CLU_252311_0_0_1"/>
<dbReference type="InParanoid" id="P32634"/>
<dbReference type="OMA" id="PQITRRF"/>
<dbReference type="OrthoDB" id="10001928at2759"/>
<dbReference type="BioCyc" id="YEAST:G3O-30295-MONOMER"/>
<dbReference type="Reactome" id="R-SCE-6798695">
    <property type="pathway name" value="Neutrophil degranulation"/>
</dbReference>
<dbReference type="BioGRID-ORCS" id="856869">
    <property type="hits" value="3 hits in 10 CRISPR screens"/>
</dbReference>
<dbReference type="ChiTaRS" id="PMD1">
    <property type="organism name" value="yeast"/>
</dbReference>
<dbReference type="PRO" id="PR:P32634"/>
<dbReference type="Proteomes" id="UP000002311">
    <property type="component" value="Chromosome V"/>
</dbReference>
<dbReference type="RNAct" id="P32634">
    <property type="molecule type" value="protein"/>
</dbReference>
<dbReference type="GO" id="GO:0005737">
    <property type="term" value="C:cytoplasm"/>
    <property type="evidence" value="ECO:0007005"/>
    <property type="project" value="SGD"/>
</dbReference>
<dbReference type="GO" id="GO:0005829">
    <property type="term" value="C:cytosol"/>
    <property type="evidence" value="ECO:0000318"/>
    <property type="project" value="GO_Central"/>
</dbReference>
<dbReference type="GO" id="GO:0004601">
    <property type="term" value="F:peroxidase activity"/>
    <property type="evidence" value="ECO:0000318"/>
    <property type="project" value="GO_Central"/>
</dbReference>
<dbReference type="GO" id="GO:0030437">
    <property type="term" value="P:ascospore formation"/>
    <property type="evidence" value="ECO:0000315"/>
    <property type="project" value="SGD"/>
</dbReference>
<dbReference type="GO" id="GO:0045454">
    <property type="term" value="P:cell redox homeostasis"/>
    <property type="evidence" value="ECO:0000318"/>
    <property type="project" value="GO_Central"/>
</dbReference>
<dbReference type="FunFam" id="2.120.10.80:FF:000117">
    <property type="entry name" value="Negative regulator of sporulation MDS3"/>
    <property type="match status" value="1"/>
</dbReference>
<dbReference type="Gene3D" id="2.120.10.80">
    <property type="entry name" value="Kelch-type beta propeller"/>
    <property type="match status" value="1"/>
</dbReference>
<dbReference type="InterPro" id="IPR056737">
    <property type="entry name" value="Beta-prop_ATRN-MKLN-like"/>
</dbReference>
<dbReference type="InterPro" id="IPR015915">
    <property type="entry name" value="Kelch-typ_b-propeller"/>
</dbReference>
<dbReference type="PANTHER" id="PTHR43503">
    <property type="entry name" value="MCG48959-RELATED"/>
    <property type="match status" value="1"/>
</dbReference>
<dbReference type="PANTHER" id="PTHR43503:SF2">
    <property type="entry name" value="NEGATIVE REGULATOR OF SPORULATION MDS3-RELATED"/>
    <property type="match status" value="1"/>
</dbReference>
<dbReference type="Pfam" id="PF24981">
    <property type="entry name" value="Beta-prop_ATRN-LZTR1"/>
    <property type="match status" value="1"/>
</dbReference>
<dbReference type="SUPFAM" id="SSF117281">
    <property type="entry name" value="Kelch motif"/>
    <property type="match status" value="1"/>
</dbReference>
<feature type="chain" id="PRO_0000119141" description="Negative regulator of sporulation PMD1">
    <location>
        <begin position="1"/>
        <end position="1753"/>
    </location>
</feature>
<feature type="repeat" description="Kelch 1">
    <location>
        <begin position="143"/>
        <end position="198"/>
    </location>
</feature>
<feature type="repeat" description="Kelch 2">
    <location>
        <begin position="206"/>
        <end position="253"/>
    </location>
</feature>
<feature type="region of interest" description="Disordered" evidence="1">
    <location>
        <begin position="651"/>
        <end position="753"/>
    </location>
</feature>
<feature type="region of interest" description="Disordered" evidence="1">
    <location>
        <begin position="771"/>
        <end position="807"/>
    </location>
</feature>
<feature type="region of interest" description="Disordered" evidence="1">
    <location>
        <begin position="875"/>
        <end position="915"/>
    </location>
</feature>
<feature type="region of interest" description="Disordered" evidence="1">
    <location>
        <begin position="938"/>
        <end position="957"/>
    </location>
</feature>
<feature type="region of interest" description="Disordered" evidence="1">
    <location>
        <begin position="962"/>
        <end position="988"/>
    </location>
</feature>
<feature type="region of interest" description="Disordered" evidence="1">
    <location>
        <begin position="1312"/>
        <end position="1467"/>
    </location>
</feature>
<feature type="region of interest" description="Disordered" evidence="1">
    <location>
        <begin position="1604"/>
        <end position="1686"/>
    </location>
</feature>
<feature type="region of interest" description="Disordered" evidence="1">
    <location>
        <begin position="1706"/>
        <end position="1753"/>
    </location>
</feature>
<feature type="compositionally biased region" description="Polar residues" evidence="1">
    <location>
        <begin position="651"/>
        <end position="664"/>
    </location>
</feature>
<feature type="compositionally biased region" description="Low complexity" evidence="1">
    <location>
        <begin position="670"/>
        <end position="683"/>
    </location>
</feature>
<feature type="compositionally biased region" description="Polar residues" evidence="1">
    <location>
        <begin position="690"/>
        <end position="699"/>
    </location>
</feature>
<feature type="compositionally biased region" description="Polar residues" evidence="1">
    <location>
        <begin position="740"/>
        <end position="753"/>
    </location>
</feature>
<feature type="compositionally biased region" description="Polar residues" evidence="1">
    <location>
        <begin position="774"/>
        <end position="783"/>
    </location>
</feature>
<feature type="compositionally biased region" description="Polar residues" evidence="1">
    <location>
        <begin position="797"/>
        <end position="807"/>
    </location>
</feature>
<feature type="compositionally biased region" description="Low complexity" evidence="1">
    <location>
        <begin position="880"/>
        <end position="900"/>
    </location>
</feature>
<feature type="compositionally biased region" description="Pro residues" evidence="1">
    <location>
        <begin position="938"/>
        <end position="947"/>
    </location>
</feature>
<feature type="compositionally biased region" description="Low complexity" evidence="1">
    <location>
        <begin position="979"/>
        <end position="988"/>
    </location>
</feature>
<feature type="compositionally biased region" description="Polar residues" evidence="1">
    <location>
        <begin position="1344"/>
        <end position="1379"/>
    </location>
</feature>
<feature type="compositionally biased region" description="Basic and acidic residues" evidence="1">
    <location>
        <begin position="1399"/>
        <end position="1430"/>
    </location>
</feature>
<feature type="compositionally biased region" description="Polar residues" evidence="1">
    <location>
        <begin position="1653"/>
        <end position="1677"/>
    </location>
</feature>
<feature type="compositionally biased region" description="Basic and acidic residues" evidence="1">
    <location>
        <begin position="1711"/>
        <end position="1723"/>
    </location>
</feature>
<feature type="modified residue" description="Phosphothreonine" evidence="9">
    <location>
        <position position="298"/>
    </location>
</feature>
<feature type="modified residue" description="Phosphoserine" evidence="9">
    <location>
        <position position="838"/>
    </location>
</feature>
<feature type="modified residue" description="Phosphoserine" evidence="9">
    <location>
        <position position="1289"/>
    </location>
</feature>
<feature type="modified residue" description="Phosphoserine" evidence="7 9">
    <location>
        <position position="1307"/>
    </location>
</feature>
<feature type="modified residue" description="Phosphoserine" evidence="7">
    <location>
        <position position="1356"/>
    </location>
</feature>
<feature type="modified residue" description="Phosphoserine" evidence="6 8 9">
    <location>
        <position position="1664"/>
    </location>
</feature>
<reference key="1">
    <citation type="journal article" date="1997" name="Nature">
        <title>The nucleotide sequence of Saccharomyces cerevisiae chromosome V.</title>
        <authorList>
            <person name="Dietrich F.S."/>
            <person name="Mulligan J.T."/>
            <person name="Hennessy K.M."/>
            <person name="Yelton M.A."/>
            <person name="Allen E."/>
            <person name="Araujo R."/>
            <person name="Aviles E."/>
            <person name="Berno A."/>
            <person name="Brennan T."/>
            <person name="Carpenter J."/>
            <person name="Chen E."/>
            <person name="Cherry J.M."/>
            <person name="Chung E."/>
            <person name="Duncan M."/>
            <person name="Guzman E."/>
            <person name="Hartzell G."/>
            <person name="Hunicke-Smith S."/>
            <person name="Hyman R.W."/>
            <person name="Kayser A."/>
            <person name="Komp C."/>
            <person name="Lashkari D."/>
            <person name="Lew H."/>
            <person name="Lin D."/>
            <person name="Mosedale D."/>
            <person name="Nakahara K."/>
            <person name="Namath A."/>
            <person name="Norgren R."/>
            <person name="Oefner P."/>
            <person name="Oh C."/>
            <person name="Petel F.X."/>
            <person name="Roberts D."/>
            <person name="Sehl P."/>
            <person name="Schramm S."/>
            <person name="Shogren T."/>
            <person name="Smith V."/>
            <person name="Taylor P."/>
            <person name="Wei Y."/>
            <person name="Botstein D."/>
            <person name="Davis R.W."/>
        </authorList>
    </citation>
    <scope>NUCLEOTIDE SEQUENCE [LARGE SCALE GENOMIC DNA]</scope>
    <source>
        <strain>ATCC 204508 / S288c</strain>
    </source>
</reference>
<reference key="2">
    <citation type="journal article" date="2014" name="G3 (Bethesda)">
        <title>The reference genome sequence of Saccharomyces cerevisiae: Then and now.</title>
        <authorList>
            <person name="Engel S.R."/>
            <person name="Dietrich F.S."/>
            <person name="Fisk D.G."/>
            <person name="Binkley G."/>
            <person name="Balakrishnan R."/>
            <person name="Costanzo M.C."/>
            <person name="Dwight S.S."/>
            <person name="Hitz B.C."/>
            <person name="Karra K."/>
            <person name="Nash R.S."/>
            <person name="Weng S."/>
            <person name="Wong E.D."/>
            <person name="Lloyd P."/>
            <person name="Skrzypek M.S."/>
            <person name="Miyasato S.R."/>
            <person name="Simison M."/>
            <person name="Cherry J.M."/>
        </authorList>
    </citation>
    <scope>GENOME REANNOTATION</scope>
    <source>
        <strain>ATCC 204508 / S288c</strain>
    </source>
</reference>
<reference key="3">
    <citation type="journal article" date="1997" name="Genetics">
        <title>Identification of a new class of negative regulators affecting sporulation-specific gene expression in yeast.</title>
        <authorList>
            <person name="Benni M.L."/>
            <person name="Neigeborn L."/>
        </authorList>
    </citation>
    <scope>CHARACTERIZATION</scope>
</reference>
<reference key="4">
    <citation type="journal article" date="2002" name="Genetics">
        <title>Candida albicans Mds3p, a conserved regulator of pH responses and virulence identified through insertional mutagenesis.</title>
        <authorList>
            <person name="Davis D.A."/>
            <person name="Bruno V.M."/>
            <person name="Loza L."/>
            <person name="Filler S.G."/>
            <person name="Mitchell A.P."/>
        </authorList>
    </citation>
    <scope>FUNCTION</scope>
</reference>
<reference key="5">
    <citation type="journal article" date="2003" name="Nature">
        <title>Global analysis of protein localization in budding yeast.</title>
        <authorList>
            <person name="Huh W.-K."/>
            <person name="Falvo J.V."/>
            <person name="Gerke L.C."/>
            <person name="Carroll A.S."/>
            <person name="Howson R.W."/>
            <person name="Weissman J.S."/>
            <person name="O'Shea E.K."/>
        </authorList>
    </citation>
    <scope>SUBCELLULAR LOCATION [LARGE SCALE ANALYSIS]</scope>
</reference>
<reference key="6">
    <citation type="journal article" date="2003" name="Nature">
        <title>Global analysis of protein expression in yeast.</title>
        <authorList>
            <person name="Ghaemmaghami S."/>
            <person name="Huh W.-K."/>
            <person name="Bower K."/>
            <person name="Howson R.W."/>
            <person name="Belle A."/>
            <person name="Dephoure N."/>
            <person name="O'Shea E.K."/>
            <person name="Weissman J.S."/>
        </authorList>
    </citation>
    <scope>LEVEL OF PROTEIN EXPRESSION [LARGE SCALE ANALYSIS]</scope>
</reference>
<reference key="7">
    <citation type="journal article" date="2005" name="Mol. Cell. Proteomics">
        <title>Quantitative phosphoproteomics applied to the yeast pheromone signaling pathway.</title>
        <authorList>
            <person name="Gruhler A."/>
            <person name="Olsen J.V."/>
            <person name="Mohammed S."/>
            <person name="Mortensen P."/>
            <person name="Faergeman N.J."/>
            <person name="Mann M."/>
            <person name="Jensen O.N."/>
        </authorList>
    </citation>
    <scope>PHOSPHORYLATION [LARGE SCALE ANALYSIS] AT SER-1664</scope>
    <scope>IDENTIFICATION BY MASS SPECTROMETRY [LARGE SCALE ANALYSIS]</scope>
    <source>
        <strain>YAL6B</strain>
    </source>
</reference>
<reference key="8">
    <citation type="journal article" date="2007" name="J. Proteome Res.">
        <title>Large-scale phosphorylation analysis of alpha-factor-arrested Saccharomyces cerevisiae.</title>
        <authorList>
            <person name="Li X."/>
            <person name="Gerber S.A."/>
            <person name="Rudner A.D."/>
            <person name="Beausoleil S.A."/>
            <person name="Haas W."/>
            <person name="Villen J."/>
            <person name="Elias J.E."/>
            <person name="Gygi S.P."/>
        </authorList>
    </citation>
    <scope>PHOSPHORYLATION [LARGE SCALE ANALYSIS] AT SER-1307 AND SER-1356</scope>
    <scope>IDENTIFICATION BY MASS SPECTROMETRY [LARGE SCALE ANALYSIS]</scope>
    <source>
        <strain>ADR376</strain>
    </source>
</reference>
<reference key="9">
    <citation type="journal article" date="2008" name="Mol. Cell. Proteomics">
        <title>A multidimensional chromatography technology for in-depth phosphoproteome analysis.</title>
        <authorList>
            <person name="Albuquerque C.P."/>
            <person name="Smolka M.B."/>
            <person name="Payne S.H."/>
            <person name="Bafna V."/>
            <person name="Eng J."/>
            <person name="Zhou H."/>
        </authorList>
    </citation>
    <scope>PHOSPHORYLATION [LARGE SCALE ANALYSIS] AT SER-1664</scope>
    <scope>IDENTIFICATION BY MASS SPECTROMETRY [LARGE SCALE ANALYSIS]</scope>
</reference>
<reference key="10">
    <citation type="journal article" date="2009" name="Genetics">
        <title>The Ras/cAMP pathway and the CDK-like kinase Ime2 regulate the MAPK Smk1 and spore morphogenesis in Saccharomyces cerevisiae.</title>
        <authorList>
            <person name="McDonald C.M."/>
            <person name="Wagner M."/>
            <person name="Dunham M.J."/>
            <person name="Shin M.E."/>
            <person name="Ahmed N.T."/>
            <person name="Winter E."/>
        </authorList>
    </citation>
    <scope>FUNCTION</scope>
</reference>
<reference key="11">
    <citation type="journal article" date="2009" name="Science">
        <title>Global analysis of Cdk1 substrate phosphorylation sites provides insights into evolution.</title>
        <authorList>
            <person name="Holt L.J."/>
            <person name="Tuch B.B."/>
            <person name="Villen J."/>
            <person name="Johnson A.D."/>
            <person name="Gygi S.P."/>
            <person name="Morgan D.O."/>
        </authorList>
    </citation>
    <scope>PHOSPHORYLATION [LARGE SCALE ANALYSIS] AT THR-298; SER-838; SER-1289; SER-1307 AND SER-1664</scope>
    <scope>IDENTIFICATION BY MASS SPECTROMETRY [LARGE SCALE ANALYSIS]</scope>
</reference>
<accession>P32634</accession>
<accession>D3DM38</accession>
<name>PMD1_YEAST</name>
<comment type="function">
    <text evidence="2 5">Negatively regulates early sporulation-specific genes. Seems to exert its function by positively regulating the Ras/cAMP pathway. Required for growth under alkaline conditions. Acts synergetically with MDS3.</text>
</comment>
<comment type="subcellular location">
    <subcellularLocation>
        <location evidence="3">Cytoplasm</location>
    </subcellularLocation>
</comment>
<comment type="miscellaneous">
    <text evidence="4">Present with 815 molecules/cell in log phase SD medium.</text>
</comment>
<gene>
    <name type="primary">PMD1</name>
    <name type="ordered locus">YER132C</name>
    <name type="ORF">SYGP-ORF50</name>
</gene>
<sequence length="1753" mass="195383">MTVLQPPSSVCYPLNLPIVPNPNLDEATRKKLTLECRTGAAVELARSGVFVHGGLTLPLNLTIINSLQLQKELILYFGKQKDRNADFKTLADWISPEIFFLDLISRTWQRINTTIDTTSENELNNGLSFKERLFHSMCFTESNIYIFGGLMVSPHNGYELIATNELWKLDLKTKCWSLISENPQITRRFNHSMHVLNENNENQDTKLIIVGGLDNMDIPVKKIDIFNLRTSLWESESKSDENPASKGSSKILVNIDGMPISLSHDSNFSVLIENNQAEIPTLALYYPQREANTSRRGTDDGSFSTYAHDLDDKSKLPKHHHHHHGDLKYFESDDADENAVKTLMSPIVILPLLGNSQGARMTSNPTQNNKENSILQVPFHLQYPSGNYFNYNIVVIGFYPDPQPSNLHCFIYNIASGKWIRVNIACTECSISMHRFWKLLIWKSHHQALLLGTRTDDFCSPSVQKFDHILSFSLPMLNGYNKLVNTKHTRTNNGIANSHNLNVNLSLYDHLPYSNSSTIEHTNPYTVTQGYSLDDSGIPRLTSTATSQFENYSRYITVPLEMESTSSIFPPYAMVLGKDALEIFGKTLSDFEFITADGDSIGVPVYLLRKRWGRYFDSLLSNGYANTSFNYEFNGDTSNIISFSPHTASKTTKFGNSSQSSNGSLEKYFSKNGNSKSNSNTSLKKPHSVDFTSSTSSPKQRAISHNKLSPSEPILCADEEDSRSNTLKQHATGDTGLKETGTSNKRPISTTCSSTGMVFRVPFQDMKNSKLGLSEQSGRSTRASSVSPPPVYKKSTNDGNDSNCTLSNTPLVYRRASTVGTTTNSSVDDGFSSIRRASHPLQSYIIAKSSPSSISKASPAEKAFSRRKSSALRFIASPNQSRQTSFASTASTASVVSSTSGRRRNSNQISHLGSSASLPNSPILPVLNIPLPPQEKIPLEPLPPVPKAPSRRSSSLAEYVQFGRDSPVASRRSSHSTRKSSSSDARRISNSSLLRNTLDSQLLSNSYGSDIPYEASIQEYGMNNGRDEEEDGDNQDYGCISPSNIRPIFSTINAININGNFKEGEFFSSKSYINNEKSRRLSYISNPESVESTNSNNNAIIELEPLLTPRSLYMPWSTASVRAFAEFFYTAQINGKWLLAPVTLDLLIMAKIYEIPILYELITEVLYKIISKKEEGLSVTCEALLNLFQQKVSRYCNENEGKIRKQLDSSESYQDTLEIKRSLANIDNGYVDSYLLRNTSMAQSIHYTDDSNGETEIDMHHTGISSIGSLANRAVPTVFAGGPRDSHNSIGSIAFPSNSGVQNIRRSVSLFSPATKKKSSLSRETDPLDTSDQFTDDVPDSGPVSRQQNFPRRSSSFTETVPTEPTRYNYQNLDSSKSNRASDDKEEQNEQATLQDISNFDKYKVETLQKRNSNDGKDLDRTNDPLKNRGTEIPQNSSNLETDPFIRDSFDSDSGSSFRSDSDDLDSQLGILPFTKMNKKLQEQTSQEFDDSIDPLYKIGSSTPGSSRLHGSFSKYIRPNSQREDGSEYVNISSLENMVSPNALPPVDYVMKSIYRTSVLVNDSNLMTRTKEAIELSKVLKKLKKKVLQDISQMDDEMRETGKPIFARGSSSPTLSRQHSDVATPLKQQENTRPALKFASSSPISEGFRKSSIKFSQAPSTQISPRTSVTDFTASQQRRQHMNKRFSTQTTHSTSALFMNPAFMPSAVNTGRKESEGHCEDRSATANRTNRKEDATTNDNDNIAPFPFFGKRR</sequence>
<proteinExistence type="evidence at protein level"/>
<evidence type="ECO:0000256" key="1">
    <source>
        <dbReference type="SAM" id="MobiDB-lite"/>
    </source>
</evidence>
<evidence type="ECO:0000269" key="2">
    <source>
    </source>
</evidence>
<evidence type="ECO:0000269" key="3">
    <source>
    </source>
</evidence>
<evidence type="ECO:0000269" key="4">
    <source>
    </source>
</evidence>
<evidence type="ECO:0000269" key="5">
    <source>
    </source>
</evidence>
<evidence type="ECO:0007744" key="6">
    <source>
    </source>
</evidence>
<evidence type="ECO:0007744" key="7">
    <source>
    </source>
</evidence>
<evidence type="ECO:0007744" key="8">
    <source>
    </source>
</evidence>
<evidence type="ECO:0007744" key="9">
    <source>
    </source>
</evidence>